<sequence>MKFVDEASILVVAGDGGNGCVSFRREKYIPKGGPDGGDGGDGGDVWMEADENLNTLIDYRFEKSFRAERGQNGASRDCTGKRGKDVTIKVPVGTRVIDQGTGETMGDMTKHGQRLLVAKGGWHGLGNTRFKSSVNRTPRQKTNGTPGDKRELLLELMLLADVGMLGMPNAGKSTFIRAVSAAKPKVADYPFTTLVPSLGVVRMDNEKSFVVADIPGLIEGAAEGAGLGIRFLKHLERCRVLLHLIDIDPIDGTDPVENARIIISELEKYSQDLAAKPRWLVFNKIDLLDKVEAEEKAKAIAEALGWEDKYYLISAASGLGVKDLCWDVMTFIIENPVVQAEEAKQPEKVEFMWDDYHRQQLEEIAEEDDEDWDDDWDEDDEEGVEFIYKR</sequence>
<feature type="chain" id="PRO_0000385919" description="GTPase Obg">
    <location>
        <begin position="1"/>
        <end position="390"/>
    </location>
</feature>
<feature type="domain" description="Obg" evidence="2">
    <location>
        <begin position="1"/>
        <end position="159"/>
    </location>
</feature>
<feature type="domain" description="OBG-type G" evidence="1">
    <location>
        <begin position="160"/>
        <end position="333"/>
    </location>
</feature>
<feature type="region of interest" description="Disordered" evidence="3">
    <location>
        <begin position="127"/>
        <end position="147"/>
    </location>
</feature>
<feature type="compositionally biased region" description="Polar residues" evidence="3">
    <location>
        <begin position="129"/>
        <end position="145"/>
    </location>
</feature>
<feature type="binding site" evidence="1">
    <location>
        <begin position="166"/>
        <end position="173"/>
    </location>
    <ligand>
        <name>GTP</name>
        <dbReference type="ChEBI" id="CHEBI:37565"/>
    </ligand>
</feature>
<feature type="binding site" evidence="1">
    <location>
        <position position="173"/>
    </location>
    <ligand>
        <name>Mg(2+)</name>
        <dbReference type="ChEBI" id="CHEBI:18420"/>
    </ligand>
</feature>
<feature type="binding site" evidence="1">
    <location>
        <begin position="191"/>
        <end position="195"/>
    </location>
    <ligand>
        <name>GTP</name>
        <dbReference type="ChEBI" id="CHEBI:37565"/>
    </ligand>
</feature>
<feature type="binding site" evidence="1">
    <location>
        <position position="193"/>
    </location>
    <ligand>
        <name>Mg(2+)</name>
        <dbReference type="ChEBI" id="CHEBI:18420"/>
    </ligand>
</feature>
<feature type="binding site" evidence="1">
    <location>
        <begin position="213"/>
        <end position="216"/>
    </location>
    <ligand>
        <name>GTP</name>
        <dbReference type="ChEBI" id="CHEBI:37565"/>
    </ligand>
</feature>
<feature type="binding site" evidence="1">
    <location>
        <begin position="283"/>
        <end position="286"/>
    </location>
    <ligand>
        <name>GTP</name>
        <dbReference type="ChEBI" id="CHEBI:37565"/>
    </ligand>
</feature>
<feature type="binding site" evidence="1">
    <location>
        <begin position="314"/>
        <end position="316"/>
    </location>
    <ligand>
        <name>GTP</name>
        <dbReference type="ChEBI" id="CHEBI:37565"/>
    </ligand>
</feature>
<evidence type="ECO:0000255" key="1">
    <source>
        <dbReference type="HAMAP-Rule" id="MF_01454"/>
    </source>
</evidence>
<evidence type="ECO:0000255" key="2">
    <source>
        <dbReference type="PROSITE-ProRule" id="PRU01231"/>
    </source>
</evidence>
<evidence type="ECO:0000256" key="3">
    <source>
        <dbReference type="SAM" id="MobiDB-lite"/>
    </source>
</evidence>
<reference key="1">
    <citation type="journal article" date="2011" name="Proc. Natl. Acad. Sci. U.S.A.">
        <title>Genomic anatomy of Escherichia coli O157:H7 outbreaks.</title>
        <authorList>
            <person name="Eppinger M."/>
            <person name="Mammel M.K."/>
            <person name="Leclerc J.E."/>
            <person name="Ravel J."/>
            <person name="Cebula T.A."/>
        </authorList>
    </citation>
    <scope>NUCLEOTIDE SEQUENCE [LARGE SCALE GENOMIC DNA]</scope>
    <source>
        <strain>EC4115 / EHEC</strain>
    </source>
</reference>
<protein>
    <recommendedName>
        <fullName evidence="1">GTPase Obg</fullName>
        <ecNumber evidence="1">3.6.5.-</ecNumber>
    </recommendedName>
    <alternativeName>
        <fullName evidence="1">GTP-binding protein Obg</fullName>
    </alternativeName>
</protein>
<dbReference type="EC" id="3.6.5.-" evidence="1"/>
<dbReference type="EMBL" id="CP001164">
    <property type="protein sequence ID" value="ACI38165.1"/>
    <property type="molecule type" value="Genomic_DNA"/>
</dbReference>
<dbReference type="SMR" id="B5YS72"/>
<dbReference type="KEGG" id="ecf:ECH74115_4505"/>
<dbReference type="HOGENOM" id="CLU_011747_2_0_6"/>
<dbReference type="GO" id="GO:0005737">
    <property type="term" value="C:cytoplasm"/>
    <property type="evidence" value="ECO:0007669"/>
    <property type="project" value="UniProtKB-SubCell"/>
</dbReference>
<dbReference type="GO" id="GO:0005525">
    <property type="term" value="F:GTP binding"/>
    <property type="evidence" value="ECO:0007669"/>
    <property type="project" value="UniProtKB-UniRule"/>
</dbReference>
<dbReference type="GO" id="GO:0003924">
    <property type="term" value="F:GTPase activity"/>
    <property type="evidence" value="ECO:0007669"/>
    <property type="project" value="UniProtKB-UniRule"/>
</dbReference>
<dbReference type="GO" id="GO:0000287">
    <property type="term" value="F:magnesium ion binding"/>
    <property type="evidence" value="ECO:0007669"/>
    <property type="project" value="InterPro"/>
</dbReference>
<dbReference type="GO" id="GO:0042254">
    <property type="term" value="P:ribosome biogenesis"/>
    <property type="evidence" value="ECO:0007669"/>
    <property type="project" value="UniProtKB-UniRule"/>
</dbReference>
<dbReference type="CDD" id="cd01898">
    <property type="entry name" value="Obg"/>
    <property type="match status" value="1"/>
</dbReference>
<dbReference type="FunFam" id="2.70.210.12:FF:000001">
    <property type="entry name" value="GTPase Obg"/>
    <property type="match status" value="1"/>
</dbReference>
<dbReference type="FunFam" id="3.40.50.300:FF:000185">
    <property type="entry name" value="GTPase Obg"/>
    <property type="match status" value="1"/>
</dbReference>
<dbReference type="Gene3D" id="2.70.210.12">
    <property type="entry name" value="GTP1/OBG domain"/>
    <property type="match status" value="1"/>
</dbReference>
<dbReference type="Gene3D" id="3.40.50.300">
    <property type="entry name" value="P-loop containing nucleotide triphosphate hydrolases"/>
    <property type="match status" value="1"/>
</dbReference>
<dbReference type="HAMAP" id="MF_01454">
    <property type="entry name" value="GTPase_Obg"/>
    <property type="match status" value="1"/>
</dbReference>
<dbReference type="InterPro" id="IPR031167">
    <property type="entry name" value="G_OBG"/>
</dbReference>
<dbReference type="InterPro" id="IPR006073">
    <property type="entry name" value="GTP-bd"/>
</dbReference>
<dbReference type="InterPro" id="IPR014100">
    <property type="entry name" value="GTP-bd_Obg/CgtA"/>
</dbReference>
<dbReference type="InterPro" id="IPR006074">
    <property type="entry name" value="GTP1-OBG_CS"/>
</dbReference>
<dbReference type="InterPro" id="IPR006169">
    <property type="entry name" value="GTP1_OBG_dom"/>
</dbReference>
<dbReference type="InterPro" id="IPR036726">
    <property type="entry name" value="GTP1_OBG_dom_sf"/>
</dbReference>
<dbReference type="InterPro" id="IPR045086">
    <property type="entry name" value="OBG_GTPase"/>
</dbReference>
<dbReference type="InterPro" id="IPR027417">
    <property type="entry name" value="P-loop_NTPase"/>
</dbReference>
<dbReference type="NCBIfam" id="TIGR02729">
    <property type="entry name" value="Obg_CgtA"/>
    <property type="match status" value="1"/>
</dbReference>
<dbReference type="NCBIfam" id="NF008955">
    <property type="entry name" value="PRK12297.1"/>
    <property type="match status" value="1"/>
</dbReference>
<dbReference type="NCBIfam" id="NF008956">
    <property type="entry name" value="PRK12299.1"/>
    <property type="match status" value="1"/>
</dbReference>
<dbReference type="PANTHER" id="PTHR11702">
    <property type="entry name" value="DEVELOPMENTALLY REGULATED GTP-BINDING PROTEIN-RELATED"/>
    <property type="match status" value="1"/>
</dbReference>
<dbReference type="PANTHER" id="PTHR11702:SF31">
    <property type="entry name" value="MITOCHONDRIAL RIBOSOME-ASSOCIATED GTPASE 2"/>
    <property type="match status" value="1"/>
</dbReference>
<dbReference type="Pfam" id="PF01018">
    <property type="entry name" value="GTP1_OBG"/>
    <property type="match status" value="1"/>
</dbReference>
<dbReference type="Pfam" id="PF01926">
    <property type="entry name" value="MMR_HSR1"/>
    <property type="match status" value="1"/>
</dbReference>
<dbReference type="PIRSF" id="PIRSF002401">
    <property type="entry name" value="GTP_bd_Obg/CgtA"/>
    <property type="match status" value="1"/>
</dbReference>
<dbReference type="PRINTS" id="PR00326">
    <property type="entry name" value="GTP1OBG"/>
</dbReference>
<dbReference type="SUPFAM" id="SSF82051">
    <property type="entry name" value="Obg GTP-binding protein N-terminal domain"/>
    <property type="match status" value="1"/>
</dbReference>
<dbReference type="SUPFAM" id="SSF52540">
    <property type="entry name" value="P-loop containing nucleoside triphosphate hydrolases"/>
    <property type="match status" value="1"/>
</dbReference>
<dbReference type="PROSITE" id="PS51710">
    <property type="entry name" value="G_OBG"/>
    <property type="match status" value="1"/>
</dbReference>
<dbReference type="PROSITE" id="PS00905">
    <property type="entry name" value="GTP1_OBG"/>
    <property type="match status" value="1"/>
</dbReference>
<dbReference type="PROSITE" id="PS51883">
    <property type="entry name" value="OBG"/>
    <property type="match status" value="1"/>
</dbReference>
<keyword id="KW-0963">Cytoplasm</keyword>
<keyword id="KW-0342">GTP-binding</keyword>
<keyword id="KW-0378">Hydrolase</keyword>
<keyword id="KW-0460">Magnesium</keyword>
<keyword id="KW-0479">Metal-binding</keyword>
<keyword id="KW-0547">Nucleotide-binding</keyword>
<organism>
    <name type="scientific">Escherichia coli O157:H7 (strain EC4115 / EHEC)</name>
    <dbReference type="NCBI Taxonomy" id="444450"/>
    <lineage>
        <taxon>Bacteria</taxon>
        <taxon>Pseudomonadati</taxon>
        <taxon>Pseudomonadota</taxon>
        <taxon>Gammaproteobacteria</taxon>
        <taxon>Enterobacterales</taxon>
        <taxon>Enterobacteriaceae</taxon>
        <taxon>Escherichia</taxon>
    </lineage>
</organism>
<proteinExistence type="inferred from homology"/>
<accession>B5YS72</accession>
<name>OBG_ECO5E</name>
<gene>
    <name evidence="1" type="primary">obg</name>
    <name type="ordered locus">ECH74115_4505</name>
</gene>
<comment type="function">
    <text evidence="1">An essential GTPase which binds GTP, GDP and possibly (p)ppGpp with moderate affinity, with high nucleotide exchange rates and a fairly low GTP hydrolysis rate. Plays a role in control of the cell cycle, stress response, ribosome biogenesis and in those bacteria that undergo differentiation, in morphogenesis control.</text>
</comment>
<comment type="cofactor">
    <cofactor evidence="1">
        <name>Mg(2+)</name>
        <dbReference type="ChEBI" id="CHEBI:18420"/>
    </cofactor>
</comment>
<comment type="subunit">
    <text evidence="1">Monomer.</text>
</comment>
<comment type="subcellular location">
    <subcellularLocation>
        <location evidence="1">Cytoplasm</location>
    </subcellularLocation>
</comment>
<comment type="similarity">
    <text evidence="1">Belongs to the TRAFAC class OBG-HflX-like GTPase superfamily. OBG GTPase family.</text>
</comment>